<accession>A0A482NAF7</accession>
<name>ICCC_TALVA</name>
<feature type="chain" id="PRO_0000449002" description="Cytochrome P450 monooxygenase iccC">
    <location>
        <begin position="1"/>
        <end position="504"/>
    </location>
</feature>
<feature type="transmembrane region" description="Helical" evidence="2">
    <location>
        <begin position="7"/>
        <end position="26"/>
    </location>
</feature>
<feature type="binding site" description="axial binding residue" evidence="1">
    <location>
        <position position="452"/>
    </location>
    <ligand>
        <name>heme</name>
        <dbReference type="ChEBI" id="CHEBI:30413"/>
    </ligand>
    <ligandPart>
        <name>Fe</name>
        <dbReference type="ChEBI" id="CHEBI:18248"/>
    </ligandPart>
</feature>
<feature type="glycosylation site" description="N-linked (GlcNAc...) asparagine" evidence="3">
    <location>
        <position position="134"/>
    </location>
</feature>
<feature type="glycosylation site" description="N-linked (GlcNAc...) asparagine" evidence="3">
    <location>
        <position position="312"/>
    </location>
</feature>
<feature type="glycosylation site" description="N-linked (GlcNAc...) asparagine" evidence="3">
    <location>
        <position position="365"/>
    </location>
</feature>
<feature type="glycosylation site" description="N-linked (GlcNAc...) asparagine" evidence="3">
    <location>
        <position position="374"/>
    </location>
</feature>
<feature type="glycosylation site" description="N-linked (GlcNAc...) asparagine" evidence="3">
    <location>
        <position position="494"/>
    </location>
</feature>
<comment type="function">
    <text evidence="4 7">Cytochrome P450 monooxygenase; part of the gene cluster that mediates the biosynthesis of ilicicolin H, a 4-hydroxy-2-pyridonealkaloid that has potent and broad antifungal activities by inhibiting the mitochondrial respiration chain (PubMed:30905148). IccC catalyzes the ring expansion of the tetramate intermediate to the acyclic 2-pyridone intermediate that contains the trans bis-diene chain (PubMed:30905148). The biosynthesis of ilicicolin H starts with formation of the tetramic acid by the hybrid PKS-NRPS synthetase iccA with the partnering trans-enoyl reductase iccB since iccA lacks a designated enoylreductase (ER) domain. The cytochrome P450 monooxygenase iccC then catalyzes the ring expansion of the tetramate to the acyclic 2-pyridone. The pericyclase iccD further converts the acyclic 2-pyridone into 8-epi-ilicicolin H. Finally, the epimerase iccE converts 8-epi-ilicicolin H into ilicicolin H via epimerization. IccA to iccE are sufficient for ilicicolin H biosynthesis and the roles of the remaining enzymes, iccF, iccG and iccH within the pathway have still to be determined (Probable) (PubMed:30905148).</text>
</comment>
<comment type="catalytic activity">
    <reaction evidence="4">
        <text>(3E,5S)-3-[(2E,4E,8S,10E,12Z)-1-hydroxy-4,8-dimethyltetradeca-2,4,10,12-tetraen-1-ylidene]-5-[(4-hydroxyphenyl)methyl]pyrrolidine-2,4-dione + reduced [NADPH--hemoprotein reductase] + O2 = 3-[(2E,4E,8S,10E,12Z)-4,8-dimethyltetradeca-2,4,10,12-tetraenoyl]-4-hydroxy-5-(4-hydroxyphenyl)-1,2-dihydropyridin-2-one + oxidized [NADPH--hemoprotein reductase] + 2 H2O</text>
        <dbReference type="Rhea" id="RHEA:64552"/>
        <dbReference type="Rhea" id="RHEA-COMP:11964"/>
        <dbReference type="Rhea" id="RHEA-COMP:11965"/>
        <dbReference type="ChEBI" id="CHEBI:15377"/>
        <dbReference type="ChEBI" id="CHEBI:15379"/>
        <dbReference type="ChEBI" id="CHEBI:57618"/>
        <dbReference type="ChEBI" id="CHEBI:58210"/>
        <dbReference type="ChEBI" id="CHEBI:155889"/>
        <dbReference type="ChEBI" id="CHEBI:155890"/>
    </reaction>
    <physiologicalReaction direction="left-to-right" evidence="4">
        <dbReference type="Rhea" id="RHEA:64553"/>
    </physiologicalReaction>
</comment>
<comment type="cofactor">
    <cofactor evidence="1">
        <name>heme</name>
        <dbReference type="ChEBI" id="CHEBI:30413"/>
    </cofactor>
</comment>
<comment type="pathway">
    <text evidence="4">Mycotoxin biosynthesis.</text>
</comment>
<comment type="subcellular location">
    <subcellularLocation>
        <location evidence="2">Membrane</location>
        <topology evidence="2">Single-pass membrane protein</topology>
    </subcellularLocation>
</comment>
<comment type="similarity">
    <text evidence="6">Belongs to the cytochrome P450 family.</text>
</comment>
<reference key="1">
    <citation type="journal article" date="2019" name="J. Am. Chem. Soc.">
        <title>Enzyme-catalyzed inverse-electron demand Diels-Alder reaction in the biosynthesis of antifungal ilicicolin H.</title>
        <authorList>
            <person name="Zhang Z."/>
            <person name="Jamieson C.S."/>
            <person name="Zhao Y.L."/>
            <person name="Li D."/>
            <person name="Ohashi M."/>
            <person name="Houk K.N."/>
            <person name="Tang Y."/>
        </authorList>
    </citation>
    <scope>NUCLEOTIDE SEQUENCE [GENOMIC DNA]</scope>
    <scope>FUNCTION</scope>
    <scope>CATALYTIC ACTIVITY</scope>
    <scope>PATHWAY</scope>
    <source>
        <strain>HXQ-H-1</strain>
    </source>
</reference>
<evidence type="ECO:0000250" key="1">
    <source>
        <dbReference type="UniProtKB" id="P04798"/>
    </source>
</evidence>
<evidence type="ECO:0000255" key="2"/>
<evidence type="ECO:0000255" key="3">
    <source>
        <dbReference type="PROSITE-ProRule" id="PRU00498"/>
    </source>
</evidence>
<evidence type="ECO:0000269" key="4">
    <source>
    </source>
</evidence>
<evidence type="ECO:0000303" key="5">
    <source>
    </source>
</evidence>
<evidence type="ECO:0000305" key="6"/>
<evidence type="ECO:0000305" key="7">
    <source>
    </source>
</evidence>
<dbReference type="EC" id="1.-.-.-" evidence="4"/>
<dbReference type="EMBL" id="MK539848">
    <property type="protein sequence ID" value="QBQ83705.1"/>
    <property type="molecule type" value="Genomic_DNA"/>
</dbReference>
<dbReference type="SMR" id="A0A482NAF7"/>
<dbReference type="GlyCosmos" id="A0A482NAF7">
    <property type="glycosylation" value="5 sites, No reported glycans"/>
</dbReference>
<dbReference type="GO" id="GO:0016020">
    <property type="term" value="C:membrane"/>
    <property type="evidence" value="ECO:0007669"/>
    <property type="project" value="UniProtKB-SubCell"/>
</dbReference>
<dbReference type="GO" id="GO:0020037">
    <property type="term" value="F:heme binding"/>
    <property type="evidence" value="ECO:0007669"/>
    <property type="project" value="InterPro"/>
</dbReference>
<dbReference type="GO" id="GO:0005506">
    <property type="term" value="F:iron ion binding"/>
    <property type="evidence" value="ECO:0007669"/>
    <property type="project" value="InterPro"/>
</dbReference>
<dbReference type="GO" id="GO:0016491">
    <property type="term" value="F:oxidoreductase activity"/>
    <property type="evidence" value="ECO:0000314"/>
    <property type="project" value="UniProt"/>
</dbReference>
<dbReference type="GO" id="GO:0016712">
    <property type="term" value="F:oxidoreductase activity, acting on paired donors, with incorporation or reduction of molecular oxygen, reduced flavin or flavoprotein as one donor, and incorporation of one atom of oxygen"/>
    <property type="evidence" value="ECO:0007669"/>
    <property type="project" value="InterPro"/>
</dbReference>
<dbReference type="GO" id="GO:0016218">
    <property type="term" value="F:polyketide synthase activity"/>
    <property type="evidence" value="ECO:0000314"/>
    <property type="project" value="UniProt"/>
</dbReference>
<dbReference type="GO" id="GO:0140781">
    <property type="term" value="P:ilicicolin H biosynthetic process"/>
    <property type="evidence" value="ECO:0000314"/>
    <property type="project" value="GO_Central"/>
</dbReference>
<dbReference type="CDD" id="cd11063">
    <property type="entry name" value="CYP52"/>
    <property type="match status" value="1"/>
</dbReference>
<dbReference type="Gene3D" id="1.10.630.10">
    <property type="entry name" value="Cytochrome P450"/>
    <property type="match status" value="1"/>
</dbReference>
<dbReference type="InterPro" id="IPR001128">
    <property type="entry name" value="Cyt_P450"/>
</dbReference>
<dbReference type="InterPro" id="IPR017972">
    <property type="entry name" value="Cyt_P450_CS"/>
</dbReference>
<dbReference type="InterPro" id="IPR002974">
    <property type="entry name" value="Cyt_P450_E_CYP52_ascomycetes"/>
</dbReference>
<dbReference type="InterPro" id="IPR047146">
    <property type="entry name" value="Cyt_P450_E_CYP52_fungi"/>
</dbReference>
<dbReference type="InterPro" id="IPR036396">
    <property type="entry name" value="Cyt_P450_sf"/>
</dbReference>
<dbReference type="PANTHER" id="PTHR24287:SF18">
    <property type="entry name" value="CYTOCHROME P450 MONOOXYGENASE APDE-RELATED"/>
    <property type="match status" value="1"/>
</dbReference>
<dbReference type="PANTHER" id="PTHR24287">
    <property type="entry name" value="P450, PUTATIVE (EUROFUNG)-RELATED"/>
    <property type="match status" value="1"/>
</dbReference>
<dbReference type="Pfam" id="PF00067">
    <property type="entry name" value="p450"/>
    <property type="match status" value="1"/>
</dbReference>
<dbReference type="PRINTS" id="PR01239">
    <property type="entry name" value="EP450IICYP52"/>
</dbReference>
<dbReference type="SUPFAM" id="SSF48264">
    <property type="entry name" value="Cytochrome P450"/>
    <property type="match status" value="1"/>
</dbReference>
<dbReference type="PROSITE" id="PS00086">
    <property type="entry name" value="CYTOCHROME_P450"/>
    <property type="match status" value="1"/>
</dbReference>
<gene>
    <name evidence="5" type="primary">iccC</name>
</gene>
<protein>
    <recommendedName>
        <fullName evidence="5">Cytochrome P450 monooxygenase iccC</fullName>
        <ecNumber evidence="4">1.-.-.-</ecNumber>
    </recommendedName>
    <alternativeName>
        <fullName evidence="5">Ilicicolin H biosynthesis cluster protein C</fullName>
    </alternativeName>
</protein>
<organism>
    <name type="scientific">Talaromyces variabilis</name>
    <name type="common">Penicillium variabile</name>
    <dbReference type="NCBI Taxonomy" id="28576"/>
    <lineage>
        <taxon>Eukaryota</taxon>
        <taxon>Fungi</taxon>
        <taxon>Dikarya</taxon>
        <taxon>Ascomycota</taxon>
        <taxon>Pezizomycotina</taxon>
        <taxon>Eurotiomycetes</taxon>
        <taxon>Eurotiomycetidae</taxon>
        <taxon>Eurotiales</taxon>
        <taxon>Trichocomaceae</taxon>
        <taxon>Talaromyces</taxon>
    </lineage>
</organism>
<proteinExistence type="evidence at protein level"/>
<sequence>MITLQNLPWILLYTGFLAIFLSRLFSNGKQSRDEKANGCQPPARYPQWDPIMGLDLVYSQVSALKNNRYLEWLRDLHAKMPKTFSLNFFGQRWIYSIEPEILKAVYATNFRDFGVEPIRRHSKGSMPFADKGVNTTDGEDWEFSRLLIKPFFERNVYTDTDRIKVHADHFLSLIPADGETFDAQPLVQRWFLDLTTEFIFGESMGSLAHPERADIAWTMLDVLRGGRLRAQMHRFMWARDWTWWLKAVYKVHDYVNPYIRSTLKELAEREERIKQGLPVGPERTDLVWSMATHLRDEELLRSQLCLIIVPNNDTTSIFISNCLWHLARHPEVWKKLREEVFALGEETPLTFEILRNMKYLNGVLNETHRVIPNNVTQVRACVQDTVLPVGGGPDGKWPVQVRKGDIVSVTKTVMYRDPDYWGSDADEFRPERFDGLRGTWNFLPFGGGPRRCPAQMMSQTEAAYMLCRLARTYSRIEARDPEPYTAVMRIGPSNKTGVKIALYK</sequence>
<keyword id="KW-0325">Glycoprotein</keyword>
<keyword id="KW-0349">Heme</keyword>
<keyword id="KW-0408">Iron</keyword>
<keyword id="KW-0472">Membrane</keyword>
<keyword id="KW-0479">Metal-binding</keyword>
<keyword id="KW-0503">Monooxygenase</keyword>
<keyword id="KW-0560">Oxidoreductase</keyword>
<keyword id="KW-0812">Transmembrane</keyword>
<keyword id="KW-1133">Transmembrane helix</keyword>